<name>SYM_CORK4</name>
<gene>
    <name evidence="1" type="primary">metG</name>
    <name type="ordered locus">ckrop_0518</name>
</gene>
<protein>
    <recommendedName>
        <fullName evidence="1">Methionine--tRNA ligase</fullName>
        <ecNumber evidence="1">6.1.1.10</ecNumber>
    </recommendedName>
    <alternativeName>
        <fullName evidence="1">Methionyl-tRNA synthetase</fullName>
        <shortName evidence="1">MetRS</shortName>
    </alternativeName>
</protein>
<dbReference type="EC" id="6.1.1.10" evidence="1"/>
<dbReference type="EMBL" id="CP001620">
    <property type="protein sequence ID" value="ACR17291.1"/>
    <property type="molecule type" value="Genomic_DNA"/>
</dbReference>
<dbReference type="RefSeq" id="WP_012731178.1">
    <property type="nucleotide sequence ID" value="NC_012704.1"/>
</dbReference>
<dbReference type="SMR" id="C4LHI6"/>
<dbReference type="STRING" id="645127.ckrop_0518"/>
<dbReference type="KEGG" id="ckp:ckrop_0518"/>
<dbReference type="eggNOG" id="COG0143">
    <property type="taxonomic scope" value="Bacteria"/>
</dbReference>
<dbReference type="HOGENOM" id="CLU_009710_1_2_11"/>
<dbReference type="OrthoDB" id="9810191at2"/>
<dbReference type="Proteomes" id="UP000001473">
    <property type="component" value="Chromosome"/>
</dbReference>
<dbReference type="GO" id="GO:0005829">
    <property type="term" value="C:cytosol"/>
    <property type="evidence" value="ECO:0007669"/>
    <property type="project" value="TreeGrafter"/>
</dbReference>
<dbReference type="GO" id="GO:0005524">
    <property type="term" value="F:ATP binding"/>
    <property type="evidence" value="ECO:0007669"/>
    <property type="project" value="UniProtKB-UniRule"/>
</dbReference>
<dbReference type="GO" id="GO:0046872">
    <property type="term" value="F:metal ion binding"/>
    <property type="evidence" value="ECO:0007669"/>
    <property type="project" value="UniProtKB-KW"/>
</dbReference>
<dbReference type="GO" id="GO:0004825">
    <property type="term" value="F:methionine-tRNA ligase activity"/>
    <property type="evidence" value="ECO:0007669"/>
    <property type="project" value="UniProtKB-UniRule"/>
</dbReference>
<dbReference type="GO" id="GO:0006431">
    <property type="term" value="P:methionyl-tRNA aminoacylation"/>
    <property type="evidence" value="ECO:0007669"/>
    <property type="project" value="UniProtKB-UniRule"/>
</dbReference>
<dbReference type="CDD" id="cd07957">
    <property type="entry name" value="Anticodon_Ia_Met"/>
    <property type="match status" value="1"/>
</dbReference>
<dbReference type="CDD" id="cd00814">
    <property type="entry name" value="MetRS_core"/>
    <property type="match status" value="1"/>
</dbReference>
<dbReference type="FunFam" id="2.20.28.20:FF:000001">
    <property type="entry name" value="Methionine--tRNA ligase"/>
    <property type="match status" value="1"/>
</dbReference>
<dbReference type="Gene3D" id="3.40.50.620">
    <property type="entry name" value="HUPs"/>
    <property type="match status" value="1"/>
</dbReference>
<dbReference type="Gene3D" id="1.10.730.10">
    <property type="entry name" value="Isoleucyl-tRNA Synthetase, Domain 1"/>
    <property type="match status" value="1"/>
</dbReference>
<dbReference type="Gene3D" id="2.20.28.20">
    <property type="entry name" value="Methionyl-tRNA synthetase, Zn-domain"/>
    <property type="match status" value="1"/>
</dbReference>
<dbReference type="HAMAP" id="MF_00098">
    <property type="entry name" value="Met_tRNA_synth_type1"/>
    <property type="match status" value="1"/>
</dbReference>
<dbReference type="InterPro" id="IPR041872">
    <property type="entry name" value="Anticodon_Met"/>
</dbReference>
<dbReference type="InterPro" id="IPR023458">
    <property type="entry name" value="Met-tRNA_ligase_1"/>
</dbReference>
<dbReference type="InterPro" id="IPR014758">
    <property type="entry name" value="Met-tRNA_synth"/>
</dbReference>
<dbReference type="InterPro" id="IPR015413">
    <property type="entry name" value="Methionyl/Leucyl_tRNA_Synth"/>
</dbReference>
<dbReference type="InterPro" id="IPR033911">
    <property type="entry name" value="MetRS_core"/>
</dbReference>
<dbReference type="InterPro" id="IPR029038">
    <property type="entry name" value="MetRS_Zn"/>
</dbReference>
<dbReference type="InterPro" id="IPR014729">
    <property type="entry name" value="Rossmann-like_a/b/a_fold"/>
</dbReference>
<dbReference type="InterPro" id="IPR009080">
    <property type="entry name" value="tRNAsynth_Ia_anticodon-bd"/>
</dbReference>
<dbReference type="NCBIfam" id="TIGR00398">
    <property type="entry name" value="metG"/>
    <property type="match status" value="1"/>
</dbReference>
<dbReference type="PANTHER" id="PTHR45765">
    <property type="entry name" value="METHIONINE--TRNA LIGASE"/>
    <property type="match status" value="1"/>
</dbReference>
<dbReference type="PANTHER" id="PTHR45765:SF1">
    <property type="entry name" value="METHIONINE--TRNA LIGASE, CYTOPLASMIC"/>
    <property type="match status" value="1"/>
</dbReference>
<dbReference type="Pfam" id="PF19303">
    <property type="entry name" value="Anticodon_3"/>
    <property type="match status" value="1"/>
</dbReference>
<dbReference type="Pfam" id="PF09334">
    <property type="entry name" value="tRNA-synt_1g"/>
    <property type="match status" value="1"/>
</dbReference>
<dbReference type="PRINTS" id="PR01041">
    <property type="entry name" value="TRNASYNTHMET"/>
</dbReference>
<dbReference type="SUPFAM" id="SSF47323">
    <property type="entry name" value="Anticodon-binding domain of a subclass of class I aminoacyl-tRNA synthetases"/>
    <property type="match status" value="1"/>
</dbReference>
<dbReference type="SUPFAM" id="SSF57770">
    <property type="entry name" value="Methionyl-tRNA synthetase (MetRS), Zn-domain"/>
    <property type="match status" value="1"/>
</dbReference>
<dbReference type="SUPFAM" id="SSF52374">
    <property type="entry name" value="Nucleotidylyl transferase"/>
    <property type="match status" value="1"/>
</dbReference>
<feature type="chain" id="PRO_1000202755" description="Methionine--tRNA ligase">
    <location>
        <begin position="1"/>
        <end position="612"/>
    </location>
</feature>
<feature type="short sequence motif" description="'HIGH' region">
    <location>
        <begin position="12"/>
        <end position="22"/>
    </location>
</feature>
<feature type="short sequence motif" description="'KMSKS' region">
    <location>
        <begin position="348"/>
        <end position="352"/>
    </location>
</feature>
<feature type="binding site" evidence="1">
    <location>
        <position position="144"/>
    </location>
    <ligand>
        <name>Zn(2+)</name>
        <dbReference type="ChEBI" id="CHEBI:29105"/>
    </ligand>
</feature>
<feature type="binding site" evidence="1">
    <location>
        <position position="147"/>
    </location>
    <ligand>
        <name>Zn(2+)</name>
        <dbReference type="ChEBI" id="CHEBI:29105"/>
    </ligand>
</feature>
<feature type="binding site" evidence="1">
    <location>
        <position position="157"/>
    </location>
    <ligand>
        <name>Zn(2+)</name>
        <dbReference type="ChEBI" id="CHEBI:29105"/>
    </ligand>
</feature>
<feature type="binding site" evidence="1">
    <location>
        <position position="160"/>
    </location>
    <ligand>
        <name>Zn(2+)</name>
        <dbReference type="ChEBI" id="CHEBI:29105"/>
    </ligand>
</feature>
<feature type="binding site" evidence="1">
    <location>
        <position position="351"/>
    </location>
    <ligand>
        <name>ATP</name>
        <dbReference type="ChEBI" id="CHEBI:30616"/>
    </ligand>
</feature>
<keyword id="KW-0030">Aminoacyl-tRNA synthetase</keyword>
<keyword id="KW-0067">ATP-binding</keyword>
<keyword id="KW-0963">Cytoplasm</keyword>
<keyword id="KW-0436">Ligase</keyword>
<keyword id="KW-0479">Metal-binding</keyword>
<keyword id="KW-0547">Nucleotide-binding</keyword>
<keyword id="KW-0648">Protein biosynthesis</keyword>
<keyword id="KW-1185">Reference proteome</keyword>
<keyword id="KW-0862">Zinc</keyword>
<organism>
    <name type="scientific">Corynebacterium kroppenstedtii (strain DSM 44385 / JCM 11950 / CIP 105744 / CCUG 35717)</name>
    <dbReference type="NCBI Taxonomy" id="645127"/>
    <lineage>
        <taxon>Bacteria</taxon>
        <taxon>Bacillati</taxon>
        <taxon>Actinomycetota</taxon>
        <taxon>Actinomycetes</taxon>
        <taxon>Mycobacteriales</taxon>
        <taxon>Corynebacteriaceae</taxon>
        <taxon>Corynebacterium</taxon>
    </lineage>
</organism>
<accession>C4LHI6</accession>
<reference key="1">
    <citation type="journal article" date="2008" name="J. Biotechnol.">
        <title>Ultrafast pyrosequencing of Corynebacterium kroppenstedtii DSM44385 revealed insights into the physiology of a lipophilic corynebacterium that lacks mycolic acids.</title>
        <authorList>
            <person name="Tauch A."/>
            <person name="Schneider J."/>
            <person name="Szczepanowski R."/>
            <person name="Tilker A."/>
            <person name="Viehoever P."/>
            <person name="Gartemann K.-H."/>
            <person name="Arnold W."/>
            <person name="Blom J."/>
            <person name="Brinkrolf K."/>
            <person name="Brune I."/>
            <person name="Goetker S."/>
            <person name="Weisshaar B."/>
            <person name="Goesmann A."/>
            <person name="Droege M."/>
            <person name="Puehler A."/>
        </authorList>
    </citation>
    <scope>NUCLEOTIDE SEQUENCE [LARGE SCALE GENOMIC DNA]</scope>
    <source>
        <strain>DSM 44385 / JCM 11950 / CIP 105744 / CCUG 35717</strain>
    </source>
</reference>
<evidence type="ECO:0000255" key="1">
    <source>
        <dbReference type="HAMAP-Rule" id="MF_00098"/>
    </source>
</evidence>
<sequence>MSAPILTSVAWPYANGPRHIGHVAGFGVPSDVFARYQRMRGRDVLMVSGTDEHGTPLLVQAEKEGVSVQQLADTYNKQIVEDLAGLGLSYDLFTRTTTRNHYAIVQELFTTLYSNGYMVKQTTLGAISPSTGRTLPDRYIEGTCPICGAPGARGDQCDTCGNQLDPADLIDSVSKINGETPKFVETEHFLLDLPALADALGEWLESRQDWRPNVLKFSLNILKDIKPRAMTRDIDWGVPVPLEGWADNKFKKLYVWFDAVVGYLSASIEWAHRIGDPDAWKKWWTNPEAKSYYFMGKDNITFHSQIWPAEMLGYRGLGSRGGTEGKLGDLQLPTEVVSSEYLTMSGSKFSSSKGVVIYVQDFLREFGPDPLRYFIAVAGPENNDTDFTWDEFVRRNNNELANSWGNLINRTVSMAAKNFGEVPDISGLELTDDDNALLDLAEKTFDIVADNIEHSRFRAGINEAMHVVGEANAYIAAQEPWKLAKDEDQRDRLAVVLHTALQVVSDCNVLLTPYLPHAAQKVHETLGRTGEWAAMPRIDEVTDDTPVELMGVGLPEEGRTYHVITGEYSHQQAAWKRIPIEAGTTLKKPKPIFAKLDPELAETGPEWAPVVH</sequence>
<proteinExistence type="inferred from homology"/>
<comment type="function">
    <text evidence="1">Is required not only for elongation of protein synthesis but also for the initiation of all mRNA translation through initiator tRNA(fMet) aminoacylation.</text>
</comment>
<comment type="catalytic activity">
    <reaction evidence="1">
        <text>tRNA(Met) + L-methionine + ATP = L-methionyl-tRNA(Met) + AMP + diphosphate</text>
        <dbReference type="Rhea" id="RHEA:13481"/>
        <dbReference type="Rhea" id="RHEA-COMP:9667"/>
        <dbReference type="Rhea" id="RHEA-COMP:9698"/>
        <dbReference type="ChEBI" id="CHEBI:30616"/>
        <dbReference type="ChEBI" id="CHEBI:33019"/>
        <dbReference type="ChEBI" id="CHEBI:57844"/>
        <dbReference type="ChEBI" id="CHEBI:78442"/>
        <dbReference type="ChEBI" id="CHEBI:78530"/>
        <dbReference type="ChEBI" id="CHEBI:456215"/>
        <dbReference type="EC" id="6.1.1.10"/>
    </reaction>
</comment>
<comment type="cofactor">
    <cofactor evidence="1">
        <name>Zn(2+)</name>
        <dbReference type="ChEBI" id="CHEBI:29105"/>
    </cofactor>
    <text evidence="1">Binds 1 zinc ion per subunit.</text>
</comment>
<comment type="subunit">
    <text evidence="1">Monomer.</text>
</comment>
<comment type="subcellular location">
    <subcellularLocation>
        <location evidence="1">Cytoplasm</location>
    </subcellularLocation>
</comment>
<comment type="similarity">
    <text evidence="1">Belongs to the class-I aminoacyl-tRNA synthetase family. MetG type 1 subfamily.</text>
</comment>